<keyword id="KW-0240">DNA-directed RNA polymerase</keyword>
<keyword id="KW-0548">Nucleotidyltransferase</keyword>
<keyword id="KW-0804">Transcription</keyword>
<keyword id="KW-0808">Transferase</keyword>
<evidence type="ECO:0000255" key="1">
    <source>
        <dbReference type="HAMAP-Rule" id="MF_00366"/>
    </source>
</evidence>
<accession>Q1BY72</accession>
<reference key="1">
    <citation type="submission" date="2006-05" db="EMBL/GenBank/DDBJ databases">
        <title>Complete sequence of chromosome 1 of Burkholderia cenocepacia AU 1054.</title>
        <authorList>
            <consortium name="US DOE Joint Genome Institute"/>
            <person name="Copeland A."/>
            <person name="Lucas S."/>
            <person name="Lapidus A."/>
            <person name="Barry K."/>
            <person name="Detter J.C."/>
            <person name="Glavina del Rio T."/>
            <person name="Hammon N."/>
            <person name="Israni S."/>
            <person name="Dalin E."/>
            <person name="Tice H."/>
            <person name="Pitluck S."/>
            <person name="Chain P."/>
            <person name="Malfatti S."/>
            <person name="Shin M."/>
            <person name="Vergez L."/>
            <person name="Schmutz J."/>
            <person name="Larimer F."/>
            <person name="Land M."/>
            <person name="Hauser L."/>
            <person name="Kyrpides N."/>
            <person name="Lykidis A."/>
            <person name="LiPuma J.J."/>
            <person name="Konstantinidis K."/>
            <person name="Tiedje J.M."/>
            <person name="Richardson P."/>
        </authorList>
    </citation>
    <scope>NUCLEOTIDE SEQUENCE [LARGE SCALE GENOMIC DNA]</scope>
    <source>
        <strain>AU 1054</strain>
    </source>
</reference>
<name>RPOZ_BURO1</name>
<protein>
    <recommendedName>
        <fullName evidence="1">DNA-directed RNA polymerase subunit omega</fullName>
        <shortName evidence="1">RNAP omega subunit</shortName>
        <ecNumber evidence="1">2.7.7.6</ecNumber>
    </recommendedName>
    <alternativeName>
        <fullName evidence="1">RNA polymerase omega subunit</fullName>
    </alternativeName>
    <alternativeName>
        <fullName evidence="1">Transcriptase subunit omega</fullName>
    </alternativeName>
</protein>
<dbReference type="EC" id="2.7.7.6" evidence="1"/>
<dbReference type="EMBL" id="CP000378">
    <property type="protein sequence ID" value="ABF75433.1"/>
    <property type="molecule type" value="Genomic_DNA"/>
</dbReference>
<dbReference type="SMR" id="Q1BY72"/>
<dbReference type="HOGENOM" id="CLU_125406_5_2_4"/>
<dbReference type="GO" id="GO:0000428">
    <property type="term" value="C:DNA-directed RNA polymerase complex"/>
    <property type="evidence" value="ECO:0007669"/>
    <property type="project" value="UniProtKB-KW"/>
</dbReference>
<dbReference type="GO" id="GO:0003677">
    <property type="term" value="F:DNA binding"/>
    <property type="evidence" value="ECO:0007669"/>
    <property type="project" value="UniProtKB-UniRule"/>
</dbReference>
<dbReference type="GO" id="GO:0003899">
    <property type="term" value="F:DNA-directed RNA polymerase activity"/>
    <property type="evidence" value="ECO:0007669"/>
    <property type="project" value="UniProtKB-UniRule"/>
</dbReference>
<dbReference type="GO" id="GO:0006351">
    <property type="term" value="P:DNA-templated transcription"/>
    <property type="evidence" value="ECO:0007669"/>
    <property type="project" value="UniProtKB-UniRule"/>
</dbReference>
<dbReference type="Gene3D" id="3.90.940.10">
    <property type="match status" value="1"/>
</dbReference>
<dbReference type="HAMAP" id="MF_00366">
    <property type="entry name" value="RNApol_bact_RpoZ"/>
    <property type="match status" value="1"/>
</dbReference>
<dbReference type="InterPro" id="IPR003716">
    <property type="entry name" value="DNA-dir_RNA_pol_omega"/>
</dbReference>
<dbReference type="InterPro" id="IPR006110">
    <property type="entry name" value="Pol_omega/Rpo6/RPB6"/>
</dbReference>
<dbReference type="InterPro" id="IPR036161">
    <property type="entry name" value="RPB6/omega-like_sf"/>
</dbReference>
<dbReference type="NCBIfam" id="TIGR00690">
    <property type="entry name" value="rpoZ"/>
    <property type="match status" value="1"/>
</dbReference>
<dbReference type="PANTHER" id="PTHR34476">
    <property type="entry name" value="DNA-DIRECTED RNA POLYMERASE SUBUNIT OMEGA"/>
    <property type="match status" value="1"/>
</dbReference>
<dbReference type="PANTHER" id="PTHR34476:SF1">
    <property type="entry name" value="DNA-DIRECTED RNA POLYMERASE SUBUNIT OMEGA"/>
    <property type="match status" value="1"/>
</dbReference>
<dbReference type="Pfam" id="PF01192">
    <property type="entry name" value="RNA_pol_Rpb6"/>
    <property type="match status" value="1"/>
</dbReference>
<dbReference type="SMART" id="SM01409">
    <property type="entry name" value="RNA_pol_Rpb6"/>
    <property type="match status" value="1"/>
</dbReference>
<dbReference type="SUPFAM" id="SSF63562">
    <property type="entry name" value="RPB6/omega subunit-like"/>
    <property type="match status" value="1"/>
</dbReference>
<gene>
    <name evidence="1" type="primary">rpoZ</name>
    <name type="ordered locus">Bcen_0521</name>
</gene>
<proteinExistence type="inferred from homology"/>
<feature type="chain" id="PRO_1000005896" description="DNA-directed RNA polymerase subunit omega">
    <location>
        <begin position="1"/>
        <end position="67"/>
    </location>
</feature>
<sequence length="67" mass="7428">MARITVEDCLKQIPNRFELALAATYRARQLAQGHTPKIESRDKPTVVALREIAAGQVGVEMLKKVPV</sequence>
<organism>
    <name type="scientific">Burkholderia orbicola (strain AU 1054)</name>
    <dbReference type="NCBI Taxonomy" id="331271"/>
    <lineage>
        <taxon>Bacteria</taxon>
        <taxon>Pseudomonadati</taxon>
        <taxon>Pseudomonadota</taxon>
        <taxon>Betaproteobacteria</taxon>
        <taxon>Burkholderiales</taxon>
        <taxon>Burkholderiaceae</taxon>
        <taxon>Burkholderia</taxon>
        <taxon>Burkholderia cepacia complex</taxon>
        <taxon>Burkholderia orbicola</taxon>
    </lineage>
</organism>
<comment type="function">
    <text evidence="1">Promotes RNA polymerase assembly. Latches the N- and C-terminal regions of the beta' subunit thereby facilitating its interaction with the beta and alpha subunits.</text>
</comment>
<comment type="catalytic activity">
    <reaction evidence="1">
        <text>RNA(n) + a ribonucleoside 5'-triphosphate = RNA(n+1) + diphosphate</text>
        <dbReference type="Rhea" id="RHEA:21248"/>
        <dbReference type="Rhea" id="RHEA-COMP:14527"/>
        <dbReference type="Rhea" id="RHEA-COMP:17342"/>
        <dbReference type="ChEBI" id="CHEBI:33019"/>
        <dbReference type="ChEBI" id="CHEBI:61557"/>
        <dbReference type="ChEBI" id="CHEBI:140395"/>
        <dbReference type="EC" id="2.7.7.6"/>
    </reaction>
</comment>
<comment type="subunit">
    <text evidence="1">The RNAP catalytic core consists of 2 alpha, 1 beta, 1 beta' and 1 omega subunit. When a sigma factor is associated with the core the holoenzyme is formed, which can initiate transcription.</text>
</comment>
<comment type="similarity">
    <text evidence="1">Belongs to the RNA polymerase subunit omega family.</text>
</comment>